<feature type="initiator methionine" description="Removed" evidence="1">
    <location>
        <position position="1"/>
    </location>
</feature>
<feature type="chain" id="PRO_0000105565" description="Flagellar hook-basal body complex protein FliE">
    <location>
        <begin position="2"/>
        <end position="104"/>
    </location>
</feature>
<name>FLIE_SHIBO</name>
<comment type="subcellular location">
    <subcellularLocation>
        <location evidence="1">Bacterial flagellum basal body</location>
    </subcellularLocation>
</comment>
<comment type="similarity">
    <text evidence="2">Belongs to the FliE family.</text>
</comment>
<evidence type="ECO:0000250" key="1"/>
<evidence type="ECO:0000305" key="2"/>
<protein>
    <recommendedName>
        <fullName>Flagellar hook-basal body complex protein FliE</fullName>
    </recommendedName>
</protein>
<reference key="1">
    <citation type="journal article" date="1997" name="J. Bacteriol.">
        <title>Cloning and characterization of the region III flagellar operons of the four Shigella subgroups: genetic defects that cause loss of flagella of Shigella boydii and Shigella sonnei.</title>
        <authorList>
            <person name="Al Mamun A.A.M."/>
            <person name="Tominaga A."/>
            <person name="Enomoto M."/>
        </authorList>
    </citation>
    <scope>NUCLEOTIDE SEQUENCE [GENOMIC DNA]</scope>
    <source>
        <strain>NCTC 9733</strain>
    </source>
</reference>
<sequence length="104" mass="11183">MSAIQGIEGVIIQLQATAMSARAQESLPQPTISFAGQLHAALDRISDTQTAARTQAEKFTLSEPGVALNDVMTDMQKASVSMQMGIQVRNKLVAAYQEVMSMQV</sequence>
<organism>
    <name type="scientific">Shigella boydii</name>
    <dbReference type="NCBI Taxonomy" id="621"/>
    <lineage>
        <taxon>Bacteria</taxon>
        <taxon>Pseudomonadati</taxon>
        <taxon>Pseudomonadota</taxon>
        <taxon>Gammaproteobacteria</taxon>
        <taxon>Enterobacterales</taxon>
        <taxon>Enterobacteriaceae</taxon>
        <taxon>Shigella</taxon>
    </lineage>
</organism>
<gene>
    <name type="primary">fliE</name>
</gene>
<keyword id="KW-0975">Bacterial flagellum</keyword>
<proteinExistence type="inferred from homology"/>
<dbReference type="EMBL" id="D89825">
    <property type="protein sequence ID" value="BAA14026.1"/>
    <property type="molecule type" value="Genomic_DNA"/>
</dbReference>
<dbReference type="SMR" id="P95713"/>
<dbReference type="GO" id="GO:0009425">
    <property type="term" value="C:bacterial-type flagellum basal body"/>
    <property type="evidence" value="ECO:0007669"/>
    <property type="project" value="UniProtKB-SubCell"/>
</dbReference>
<dbReference type="GO" id="GO:0003774">
    <property type="term" value="F:cytoskeletal motor activity"/>
    <property type="evidence" value="ECO:0007669"/>
    <property type="project" value="InterPro"/>
</dbReference>
<dbReference type="GO" id="GO:0005198">
    <property type="term" value="F:structural molecule activity"/>
    <property type="evidence" value="ECO:0007669"/>
    <property type="project" value="InterPro"/>
</dbReference>
<dbReference type="GO" id="GO:0071973">
    <property type="term" value="P:bacterial-type flagellum-dependent cell motility"/>
    <property type="evidence" value="ECO:0007669"/>
    <property type="project" value="InterPro"/>
</dbReference>
<dbReference type="HAMAP" id="MF_00724">
    <property type="entry name" value="FliE"/>
    <property type="match status" value="1"/>
</dbReference>
<dbReference type="InterPro" id="IPR001624">
    <property type="entry name" value="FliE"/>
</dbReference>
<dbReference type="NCBIfam" id="TIGR00205">
    <property type="entry name" value="fliE"/>
    <property type="match status" value="1"/>
</dbReference>
<dbReference type="PANTHER" id="PTHR34653">
    <property type="match status" value="1"/>
</dbReference>
<dbReference type="PANTHER" id="PTHR34653:SF1">
    <property type="entry name" value="FLAGELLAR HOOK-BASAL BODY COMPLEX PROTEIN FLIE"/>
    <property type="match status" value="1"/>
</dbReference>
<dbReference type="Pfam" id="PF02049">
    <property type="entry name" value="FliE"/>
    <property type="match status" value="1"/>
</dbReference>
<dbReference type="PRINTS" id="PR01006">
    <property type="entry name" value="FLGHOOKFLIE"/>
</dbReference>
<accession>P95713</accession>